<dbReference type="EC" id="6.1.1.5" evidence="1"/>
<dbReference type="EMBL" id="CR628336">
    <property type="protein sequence ID" value="CAH12150.1"/>
    <property type="molecule type" value="Genomic_DNA"/>
</dbReference>
<dbReference type="RefSeq" id="WP_011213362.1">
    <property type="nucleotide sequence ID" value="NC_006368.1"/>
</dbReference>
<dbReference type="SMR" id="Q5X6G6"/>
<dbReference type="KEGG" id="lpp:lpp0999"/>
<dbReference type="LegioList" id="lpp0999"/>
<dbReference type="HOGENOM" id="CLU_001493_7_0_6"/>
<dbReference type="GO" id="GO:0005829">
    <property type="term" value="C:cytosol"/>
    <property type="evidence" value="ECO:0007669"/>
    <property type="project" value="TreeGrafter"/>
</dbReference>
<dbReference type="GO" id="GO:0002161">
    <property type="term" value="F:aminoacyl-tRNA deacylase activity"/>
    <property type="evidence" value="ECO:0007669"/>
    <property type="project" value="InterPro"/>
</dbReference>
<dbReference type="GO" id="GO:0005524">
    <property type="term" value="F:ATP binding"/>
    <property type="evidence" value="ECO:0007669"/>
    <property type="project" value="UniProtKB-UniRule"/>
</dbReference>
<dbReference type="GO" id="GO:0004822">
    <property type="term" value="F:isoleucine-tRNA ligase activity"/>
    <property type="evidence" value="ECO:0007669"/>
    <property type="project" value="UniProtKB-UniRule"/>
</dbReference>
<dbReference type="GO" id="GO:0000049">
    <property type="term" value="F:tRNA binding"/>
    <property type="evidence" value="ECO:0007669"/>
    <property type="project" value="InterPro"/>
</dbReference>
<dbReference type="GO" id="GO:0008270">
    <property type="term" value="F:zinc ion binding"/>
    <property type="evidence" value="ECO:0007669"/>
    <property type="project" value="UniProtKB-UniRule"/>
</dbReference>
<dbReference type="GO" id="GO:0006428">
    <property type="term" value="P:isoleucyl-tRNA aminoacylation"/>
    <property type="evidence" value="ECO:0007669"/>
    <property type="project" value="UniProtKB-UniRule"/>
</dbReference>
<dbReference type="CDD" id="cd07960">
    <property type="entry name" value="Anticodon_Ia_Ile_BEm"/>
    <property type="match status" value="1"/>
</dbReference>
<dbReference type="CDD" id="cd00818">
    <property type="entry name" value="IleRS_core"/>
    <property type="match status" value="1"/>
</dbReference>
<dbReference type="FunFam" id="1.10.730.20:FF:000001">
    <property type="entry name" value="Isoleucine--tRNA ligase"/>
    <property type="match status" value="1"/>
</dbReference>
<dbReference type="FunFam" id="3.40.50.620:FF:000042">
    <property type="entry name" value="Isoleucine--tRNA ligase"/>
    <property type="match status" value="1"/>
</dbReference>
<dbReference type="FunFam" id="3.40.50.620:FF:000048">
    <property type="entry name" value="Isoleucine--tRNA ligase"/>
    <property type="match status" value="1"/>
</dbReference>
<dbReference type="Gene3D" id="1.10.730.20">
    <property type="match status" value="1"/>
</dbReference>
<dbReference type="Gene3D" id="3.40.50.620">
    <property type="entry name" value="HUPs"/>
    <property type="match status" value="2"/>
</dbReference>
<dbReference type="Gene3D" id="1.10.10.830">
    <property type="entry name" value="Ile-tRNA synthetase CP2 domain-like"/>
    <property type="match status" value="1"/>
</dbReference>
<dbReference type="Gene3D" id="3.90.740.10">
    <property type="entry name" value="Valyl/Leucyl/Isoleucyl-tRNA synthetase, editing domain"/>
    <property type="match status" value="1"/>
</dbReference>
<dbReference type="HAMAP" id="MF_02002">
    <property type="entry name" value="Ile_tRNA_synth_type1"/>
    <property type="match status" value="1"/>
</dbReference>
<dbReference type="InterPro" id="IPR001412">
    <property type="entry name" value="aa-tRNA-synth_I_CS"/>
</dbReference>
<dbReference type="InterPro" id="IPR002300">
    <property type="entry name" value="aa-tRNA-synth_Ia"/>
</dbReference>
<dbReference type="InterPro" id="IPR033708">
    <property type="entry name" value="Anticodon_Ile_BEm"/>
</dbReference>
<dbReference type="InterPro" id="IPR002301">
    <property type="entry name" value="Ile-tRNA-ligase"/>
</dbReference>
<dbReference type="InterPro" id="IPR023585">
    <property type="entry name" value="Ile-tRNA-ligase_type1"/>
</dbReference>
<dbReference type="InterPro" id="IPR050081">
    <property type="entry name" value="Ile-tRNA_ligase"/>
</dbReference>
<dbReference type="InterPro" id="IPR013155">
    <property type="entry name" value="M/V/L/I-tRNA-synth_anticd-bd"/>
</dbReference>
<dbReference type="InterPro" id="IPR014729">
    <property type="entry name" value="Rossmann-like_a/b/a_fold"/>
</dbReference>
<dbReference type="InterPro" id="IPR009080">
    <property type="entry name" value="tRNAsynth_Ia_anticodon-bd"/>
</dbReference>
<dbReference type="InterPro" id="IPR009008">
    <property type="entry name" value="Val/Leu/Ile-tRNA-synth_edit"/>
</dbReference>
<dbReference type="InterPro" id="IPR010663">
    <property type="entry name" value="Znf_FPG/IleRS"/>
</dbReference>
<dbReference type="NCBIfam" id="TIGR00392">
    <property type="entry name" value="ileS"/>
    <property type="match status" value="1"/>
</dbReference>
<dbReference type="PANTHER" id="PTHR42765:SF1">
    <property type="entry name" value="ISOLEUCINE--TRNA LIGASE, MITOCHONDRIAL"/>
    <property type="match status" value="1"/>
</dbReference>
<dbReference type="PANTHER" id="PTHR42765">
    <property type="entry name" value="SOLEUCYL-TRNA SYNTHETASE"/>
    <property type="match status" value="1"/>
</dbReference>
<dbReference type="Pfam" id="PF08264">
    <property type="entry name" value="Anticodon_1"/>
    <property type="match status" value="1"/>
</dbReference>
<dbReference type="Pfam" id="PF00133">
    <property type="entry name" value="tRNA-synt_1"/>
    <property type="match status" value="1"/>
</dbReference>
<dbReference type="Pfam" id="PF06827">
    <property type="entry name" value="zf-FPG_IleRS"/>
    <property type="match status" value="1"/>
</dbReference>
<dbReference type="PRINTS" id="PR00984">
    <property type="entry name" value="TRNASYNTHILE"/>
</dbReference>
<dbReference type="SUPFAM" id="SSF47323">
    <property type="entry name" value="Anticodon-binding domain of a subclass of class I aminoacyl-tRNA synthetases"/>
    <property type="match status" value="1"/>
</dbReference>
<dbReference type="SUPFAM" id="SSF52374">
    <property type="entry name" value="Nucleotidylyl transferase"/>
    <property type="match status" value="1"/>
</dbReference>
<dbReference type="SUPFAM" id="SSF50677">
    <property type="entry name" value="ValRS/IleRS/LeuRS editing domain"/>
    <property type="match status" value="1"/>
</dbReference>
<dbReference type="PROSITE" id="PS00178">
    <property type="entry name" value="AA_TRNA_LIGASE_I"/>
    <property type="match status" value="1"/>
</dbReference>
<accession>Q5X6G6</accession>
<organism>
    <name type="scientific">Legionella pneumophila (strain Paris)</name>
    <dbReference type="NCBI Taxonomy" id="297246"/>
    <lineage>
        <taxon>Bacteria</taxon>
        <taxon>Pseudomonadati</taxon>
        <taxon>Pseudomonadota</taxon>
        <taxon>Gammaproteobacteria</taxon>
        <taxon>Legionellales</taxon>
        <taxon>Legionellaceae</taxon>
        <taxon>Legionella</taxon>
    </lineage>
</organism>
<keyword id="KW-0030">Aminoacyl-tRNA synthetase</keyword>
<keyword id="KW-0067">ATP-binding</keyword>
<keyword id="KW-0963">Cytoplasm</keyword>
<keyword id="KW-0436">Ligase</keyword>
<keyword id="KW-0479">Metal-binding</keyword>
<keyword id="KW-0547">Nucleotide-binding</keyword>
<keyword id="KW-0648">Protein biosynthesis</keyword>
<keyword id="KW-0862">Zinc</keyword>
<feature type="chain" id="PRO_0000098406" description="Isoleucine--tRNA ligase">
    <location>
        <begin position="1"/>
        <end position="931"/>
    </location>
</feature>
<feature type="short sequence motif" description="'HIGH' region">
    <location>
        <begin position="58"/>
        <end position="68"/>
    </location>
</feature>
<feature type="short sequence motif" description="'KMSKS' region">
    <location>
        <begin position="600"/>
        <end position="604"/>
    </location>
</feature>
<feature type="binding site" evidence="1">
    <location>
        <position position="559"/>
    </location>
    <ligand>
        <name>L-isoleucyl-5'-AMP</name>
        <dbReference type="ChEBI" id="CHEBI:178002"/>
    </ligand>
</feature>
<feature type="binding site" evidence="1">
    <location>
        <position position="603"/>
    </location>
    <ligand>
        <name>ATP</name>
        <dbReference type="ChEBI" id="CHEBI:30616"/>
    </ligand>
</feature>
<feature type="binding site" evidence="1">
    <location>
        <position position="894"/>
    </location>
    <ligand>
        <name>Zn(2+)</name>
        <dbReference type="ChEBI" id="CHEBI:29105"/>
    </ligand>
</feature>
<feature type="binding site" evidence="1">
    <location>
        <position position="897"/>
    </location>
    <ligand>
        <name>Zn(2+)</name>
        <dbReference type="ChEBI" id="CHEBI:29105"/>
    </ligand>
</feature>
<feature type="binding site" evidence="1">
    <location>
        <position position="914"/>
    </location>
    <ligand>
        <name>Zn(2+)</name>
        <dbReference type="ChEBI" id="CHEBI:29105"/>
    </ligand>
</feature>
<feature type="binding site" evidence="1">
    <location>
        <position position="917"/>
    </location>
    <ligand>
        <name>Zn(2+)</name>
        <dbReference type="ChEBI" id="CHEBI:29105"/>
    </ligand>
</feature>
<gene>
    <name evidence="1" type="primary">ileS</name>
    <name type="ordered locus">lpp0999</name>
</gene>
<name>SYI_LEGPA</name>
<reference key="1">
    <citation type="journal article" date="2004" name="Nat. Genet.">
        <title>Evidence in the Legionella pneumophila genome for exploitation of host cell functions and high genome plasticity.</title>
        <authorList>
            <person name="Cazalet C."/>
            <person name="Rusniok C."/>
            <person name="Brueggemann H."/>
            <person name="Zidane N."/>
            <person name="Magnier A."/>
            <person name="Ma L."/>
            <person name="Tichit M."/>
            <person name="Jarraud S."/>
            <person name="Bouchier C."/>
            <person name="Vandenesch F."/>
            <person name="Kunst F."/>
            <person name="Etienne J."/>
            <person name="Glaser P."/>
            <person name="Buchrieser C."/>
        </authorList>
    </citation>
    <scope>NUCLEOTIDE SEQUENCE [LARGE SCALE GENOMIC DNA]</scope>
    <source>
        <strain>Paris</strain>
    </source>
</reference>
<sequence>MAEYKDTLNLPNTSFPMKASLSVREPEMLADWQAKGIYQKIRKARVGSKRFILHDGPPYANGHLHCGHALNKILKDIIIKSKTFSGFDAPFVPGWDCHGLPIELNVEKKVGKAGSKISPREFRAKCREYAASQIDIQRDEFQRLGVLGDWYNPYVTMDYHYEANIVRALGLMIKNGHLQQGFKPVHWCIDCGSALAEAEVDYEDKTSPSIDVAFSAVNPSEFLNCFETQPAVKPLILPIWTTTPWTLPANEAVCLHPEIDYALIDAGNSYYIVATDLVESVMARYGISHYKTSGSAKGRVFEHFKLQHPFYKRQVPVVLAEHVTTESGTGCVHTAPAHGPDDYLVGQSYQLPLINPVMANGCFAENVELFAGISVLKANETILAVLSERNVLLASESIRHSYPHCWRHKSPMIFLATPQWFISMDKSNLRQAIINEIDKVNWVPDWGKARISNMVENRPDWCISRQRSWGTPMPLFVHKTTRELHPDTLELIERVAVMIEKSGIDAWFDLDSSELLGDDAKHYDKITDTMDVWLDSGISHYSVLKHNNDLDFPADVYFEGSDQHRGWFNSSLTTAVAMYGVAPYKTVLTHGYTVDAEGKKLSKSKGNYVALDKLVNQHGADILRLWVASTDYRHEVSISEEIIKRNADAYRRIRNTARFLLANLFDFNPASDCIEAKELLELDRWALKRCQLLQEEIITAYENYHFHLIYQKIHNFCAVDMGSFYLDLIKDRQYTTAKDSIARRSCQTAMYHMVKAFTIWLAPILSFTAEEIWQTIPGNNSESIFIEHWYDAWPIIDAVNMEDWEQLHIVRDEVNKALEETRQRGEIGSALAAEVTVYADAKALPKLTRLGEELRFLFITSEAKACPISQSPKGLAVTDCGVSIQVTASAHEKCARCWHRREDVGQNQEHPELCLRCVGNISGYHEERLYI</sequence>
<comment type="function">
    <text evidence="1">Catalyzes the attachment of isoleucine to tRNA(Ile). As IleRS can inadvertently accommodate and process structurally similar amino acids such as valine, to avoid such errors it has two additional distinct tRNA(Ile)-dependent editing activities. One activity is designated as 'pretransfer' editing and involves the hydrolysis of activated Val-AMP. The other activity is designated 'posttransfer' editing and involves deacylation of mischarged Val-tRNA(Ile).</text>
</comment>
<comment type="catalytic activity">
    <reaction evidence="1">
        <text>tRNA(Ile) + L-isoleucine + ATP = L-isoleucyl-tRNA(Ile) + AMP + diphosphate</text>
        <dbReference type="Rhea" id="RHEA:11060"/>
        <dbReference type="Rhea" id="RHEA-COMP:9666"/>
        <dbReference type="Rhea" id="RHEA-COMP:9695"/>
        <dbReference type="ChEBI" id="CHEBI:30616"/>
        <dbReference type="ChEBI" id="CHEBI:33019"/>
        <dbReference type="ChEBI" id="CHEBI:58045"/>
        <dbReference type="ChEBI" id="CHEBI:78442"/>
        <dbReference type="ChEBI" id="CHEBI:78528"/>
        <dbReference type="ChEBI" id="CHEBI:456215"/>
        <dbReference type="EC" id="6.1.1.5"/>
    </reaction>
</comment>
<comment type="cofactor">
    <cofactor evidence="1">
        <name>Zn(2+)</name>
        <dbReference type="ChEBI" id="CHEBI:29105"/>
    </cofactor>
    <text evidence="1">Binds 1 zinc ion per subunit.</text>
</comment>
<comment type="subunit">
    <text evidence="1">Monomer.</text>
</comment>
<comment type="subcellular location">
    <subcellularLocation>
        <location evidence="1">Cytoplasm</location>
    </subcellularLocation>
</comment>
<comment type="domain">
    <text evidence="1">IleRS has two distinct active sites: one for aminoacylation and one for editing. The misactivated valine is translocated from the active site to the editing site, which sterically excludes the correctly activated isoleucine. The single editing site contains two valyl binding pockets, one specific for each substrate (Val-AMP or Val-tRNA(Ile)).</text>
</comment>
<comment type="similarity">
    <text evidence="1">Belongs to the class-I aminoacyl-tRNA synthetase family. IleS type 1 subfamily.</text>
</comment>
<proteinExistence type="inferred from homology"/>
<evidence type="ECO:0000255" key="1">
    <source>
        <dbReference type="HAMAP-Rule" id="MF_02002"/>
    </source>
</evidence>
<protein>
    <recommendedName>
        <fullName evidence="1">Isoleucine--tRNA ligase</fullName>
        <ecNumber evidence="1">6.1.1.5</ecNumber>
    </recommendedName>
    <alternativeName>
        <fullName evidence="1">Isoleucyl-tRNA synthetase</fullName>
        <shortName evidence="1">IleRS</shortName>
    </alternativeName>
</protein>